<sequence>MAILVSLLFLAIALTFFLLKLNEKREKKPNLPPSPPNLPIIGNLHQLGNLPHRSLRSLANELGPLILLHLGHIPTLIVSTAEIAEEILKTHDLIFASRPSTTAARRIFYDCTDVAFSPYGEYWRQVRKICVLELLSIKRVNSYRSIREEEVGLMMERISQSCSTGEAVNLSELLLLLSSGTITRVAFGKKYEGEEERKNKFADLATELTTLMGAFFVGDYFPSFAWVDVLTGMDARLKRNHGELDAFVDHVIDDHLLSRKANGSDGVEQKDLVDVLLHLQKDSSLGVHLNRNNLKAVILDMFSGGTDTTAVTLEWAMAELIKHPDVMEKAQQEVRRVVGKKAKVEEEDLHQLHYLKLIIKETLRLHPVAPLLVPRESTRDVVIRGYHIPAKTRVFINAWAIGRDPKSWENAEEFLPERFVNNSVDFKGQDFQLIPFGAGRRGCPGIAFGISSVEISLANLLYWFNWELPGDLTKEDLDMSEAVGITVHMKFPLQLVAKRHLS</sequence>
<accession>P24465</accession>
<proteinExistence type="evidence at protein level"/>
<evidence type="ECO:0000250" key="1"/>
<evidence type="ECO:0000255" key="2"/>
<evidence type="ECO:0000305" key="3"/>
<protein>
    <recommendedName>
        <fullName>Cytochrome P450 71A1</fullName>
        <ecNumber>1.14.-.-</ecNumber>
    </recommendedName>
    <alternativeName>
        <fullName>ARP-2</fullName>
    </alternativeName>
    <alternativeName>
        <fullName>CYPLXXIA1</fullName>
    </alternativeName>
</protein>
<feature type="chain" id="PRO_0000052056" description="Cytochrome P450 71A1">
    <location>
        <begin position="1"/>
        <end position="502"/>
    </location>
</feature>
<feature type="transmembrane region" description="Helical" evidence="2">
    <location>
        <begin position="7"/>
        <end position="21"/>
    </location>
</feature>
<feature type="binding site" description="axial binding residue" evidence="1">
    <location>
        <position position="443"/>
    </location>
    <ligand>
        <name>heme</name>
        <dbReference type="ChEBI" id="CHEBI:30413"/>
    </ligand>
    <ligandPart>
        <name>Fe</name>
        <dbReference type="ChEBI" id="CHEBI:18248"/>
    </ligandPart>
</feature>
<keyword id="KW-0903">Direct protein sequencing</keyword>
<keyword id="KW-0256">Endoplasmic reticulum</keyword>
<keyword id="KW-0292">Fruit ripening</keyword>
<keyword id="KW-0349">Heme</keyword>
<keyword id="KW-0408">Iron</keyword>
<keyword id="KW-0472">Membrane</keyword>
<keyword id="KW-0479">Metal-binding</keyword>
<keyword id="KW-0492">Microsome</keyword>
<keyword id="KW-0503">Monooxygenase</keyword>
<keyword id="KW-0560">Oxidoreductase</keyword>
<keyword id="KW-0812">Transmembrane</keyword>
<keyword id="KW-1133">Transmembrane helix</keyword>
<organism>
    <name type="scientific">Persea americana</name>
    <name type="common">Avocado</name>
    <dbReference type="NCBI Taxonomy" id="3435"/>
    <lineage>
        <taxon>Eukaryota</taxon>
        <taxon>Viridiplantae</taxon>
        <taxon>Streptophyta</taxon>
        <taxon>Embryophyta</taxon>
        <taxon>Tracheophyta</taxon>
        <taxon>Spermatophyta</taxon>
        <taxon>Magnoliopsida</taxon>
        <taxon>Magnoliidae</taxon>
        <taxon>Laurales</taxon>
        <taxon>Lauraceae</taxon>
        <taxon>Persea</taxon>
    </lineage>
</organism>
<dbReference type="EC" id="1.14.-.-"/>
<dbReference type="EMBL" id="M32885">
    <property type="protein sequence ID" value="AAA32913.1"/>
    <property type="molecule type" value="mRNA"/>
</dbReference>
<dbReference type="PIR" id="A35867">
    <property type="entry name" value="A35867"/>
</dbReference>
<dbReference type="PIR" id="T52256">
    <property type="entry name" value="T52256"/>
</dbReference>
<dbReference type="SMR" id="P24465"/>
<dbReference type="OMA" id="IVENHDI"/>
<dbReference type="OrthoDB" id="1470350at2759"/>
<dbReference type="GO" id="GO:0005789">
    <property type="term" value="C:endoplasmic reticulum membrane"/>
    <property type="evidence" value="ECO:0007669"/>
    <property type="project" value="UniProtKB-SubCell"/>
</dbReference>
<dbReference type="GO" id="GO:0020037">
    <property type="term" value="F:heme binding"/>
    <property type="evidence" value="ECO:0007669"/>
    <property type="project" value="InterPro"/>
</dbReference>
<dbReference type="GO" id="GO:0005506">
    <property type="term" value="F:iron ion binding"/>
    <property type="evidence" value="ECO:0007669"/>
    <property type="project" value="InterPro"/>
</dbReference>
<dbReference type="GO" id="GO:0004497">
    <property type="term" value="F:monooxygenase activity"/>
    <property type="evidence" value="ECO:0007669"/>
    <property type="project" value="UniProtKB-KW"/>
</dbReference>
<dbReference type="GO" id="GO:0016705">
    <property type="term" value="F:oxidoreductase activity, acting on paired donors, with incorporation or reduction of molecular oxygen"/>
    <property type="evidence" value="ECO:0007669"/>
    <property type="project" value="InterPro"/>
</dbReference>
<dbReference type="GO" id="GO:0009835">
    <property type="term" value="P:fruit ripening"/>
    <property type="evidence" value="ECO:0007669"/>
    <property type="project" value="UniProtKB-KW"/>
</dbReference>
<dbReference type="CDD" id="cd11072">
    <property type="entry name" value="CYP71-like"/>
    <property type="match status" value="1"/>
</dbReference>
<dbReference type="FunFam" id="1.10.630.10:FF:000011">
    <property type="entry name" value="Cytochrome P450 83B1"/>
    <property type="match status" value="1"/>
</dbReference>
<dbReference type="Gene3D" id="1.10.630.10">
    <property type="entry name" value="Cytochrome P450"/>
    <property type="match status" value="1"/>
</dbReference>
<dbReference type="InterPro" id="IPR001128">
    <property type="entry name" value="Cyt_P450"/>
</dbReference>
<dbReference type="InterPro" id="IPR017972">
    <property type="entry name" value="Cyt_P450_CS"/>
</dbReference>
<dbReference type="InterPro" id="IPR002401">
    <property type="entry name" value="Cyt_P450_E_grp-I"/>
</dbReference>
<dbReference type="InterPro" id="IPR036396">
    <property type="entry name" value="Cyt_P450_sf"/>
</dbReference>
<dbReference type="PANTHER" id="PTHR47955:SF15">
    <property type="entry name" value="CYTOCHROME P450 71A2-LIKE"/>
    <property type="match status" value="1"/>
</dbReference>
<dbReference type="PANTHER" id="PTHR47955">
    <property type="entry name" value="CYTOCHROME P450 FAMILY 71 PROTEIN"/>
    <property type="match status" value="1"/>
</dbReference>
<dbReference type="Pfam" id="PF00067">
    <property type="entry name" value="p450"/>
    <property type="match status" value="1"/>
</dbReference>
<dbReference type="PRINTS" id="PR00463">
    <property type="entry name" value="EP450I"/>
</dbReference>
<dbReference type="PRINTS" id="PR00385">
    <property type="entry name" value="P450"/>
</dbReference>
<dbReference type="SUPFAM" id="SSF48264">
    <property type="entry name" value="Cytochrome P450"/>
    <property type="match status" value="1"/>
</dbReference>
<dbReference type="PROSITE" id="PS00086">
    <property type="entry name" value="CYTOCHROME_P450"/>
    <property type="match status" value="1"/>
</dbReference>
<name>C71A1_PERAE</name>
<gene>
    <name type="primary">CYP71A1</name>
</gene>
<reference key="1">
    <citation type="journal article" date="1990" name="Proc. Natl. Acad. Sci. U.S.A.">
        <title>Sequence analysis of ripening-related cytochrome P-450 cDNAs from avocado fruit.</title>
        <authorList>
            <person name="Bozak K.R."/>
            <person name="Yu H."/>
            <person name="Sirevag R."/>
            <person name="Christoffersen R.E."/>
        </authorList>
    </citation>
    <scope>NUCLEOTIDE SEQUENCE [MRNA]</scope>
    <source>
        <strain>cv. Hass</strain>
    </source>
</reference>
<reference key="2">
    <citation type="journal article" date="1989" name="Plant Physiol.">
        <title>Cytochrome P-450 from the mesocarp of avocado (Persea americana).</title>
        <authorList>
            <person name="O'Keefe D.P."/>
            <person name="Leto K.J."/>
        </authorList>
    </citation>
    <scope>PROTEIN SEQUENCE OF 1-40</scope>
    <source>
        <tissue>Mesocarp</tissue>
    </source>
</reference>
<comment type="function">
    <text>Involved in the metabolism of compounds associated with the development of flavor in the ripening fruit process, possibly by acting as trans-cinnamic acid 4-hydrolase.</text>
</comment>
<comment type="cofactor">
    <cofactor evidence="1">
        <name>heme</name>
        <dbReference type="ChEBI" id="CHEBI:30413"/>
    </cofactor>
</comment>
<comment type="subcellular location">
    <subcellularLocation>
        <location>Microsome membrane</location>
        <topology>Single-pass membrane protein</topology>
    </subcellularLocation>
    <subcellularLocation>
        <location>Endoplasmic reticulum membrane</location>
        <topology>Single-pass membrane protein</topology>
    </subcellularLocation>
</comment>
<comment type="tissue specificity">
    <text>Mesocarp.</text>
</comment>
<comment type="developmental stage">
    <text>In ripening fruit.</text>
</comment>
<comment type="induction">
    <text>By ethylene.</text>
</comment>
<comment type="similarity">
    <text evidence="3">Belongs to the cytochrome P450 family.</text>
</comment>